<organism>
    <name type="scientific">Actinobacillus succinogenes (strain ATCC 55618 / DSM 22257 / CCUG 43843 / 130Z)</name>
    <dbReference type="NCBI Taxonomy" id="339671"/>
    <lineage>
        <taxon>Bacteria</taxon>
        <taxon>Pseudomonadati</taxon>
        <taxon>Pseudomonadota</taxon>
        <taxon>Gammaproteobacteria</taxon>
        <taxon>Pasteurellales</taxon>
        <taxon>Pasteurellaceae</taxon>
        <taxon>Actinobacillus</taxon>
    </lineage>
</organism>
<protein>
    <recommendedName>
        <fullName evidence="1">Tryptophan synthase beta chain</fullName>
        <ecNumber evidence="1">4.2.1.20</ecNumber>
    </recommendedName>
</protein>
<keyword id="KW-0028">Amino-acid biosynthesis</keyword>
<keyword id="KW-0057">Aromatic amino acid biosynthesis</keyword>
<keyword id="KW-0456">Lyase</keyword>
<keyword id="KW-0663">Pyridoxal phosphate</keyword>
<keyword id="KW-1185">Reference proteome</keyword>
<keyword id="KW-0822">Tryptophan biosynthesis</keyword>
<dbReference type="EC" id="4.2.1.20" evidence="1"/>
<dbReference type="EMBL" id="CP000746">
    <property type="protein sequence ID" value="ABR74836.1"/>
    <property type="molecule type" value="Genomic_DNA"/>
</dbReference>
<dbReference type="RefSeq" id="WP_012073213.1">
    <property type="nucleotide sequence ID" value="NC_009655.1"/>
</dbReference>
<dbReference type="SMR" id="A6VPD9"/>
<dbReference type="STRING" id="339671.Asuc_1478"/>
<dbReference type="KEGG" id="asu:Asuc_1478"/>
<dbReference type="eggNOG" id="COG0133">
    <property type="taxonomic scope" value="Bacteria"/>
</dbReference>
<dbReference type="HOGENOM" id="CLU_016734_3_1_6"/>
<dbReference type="OrthoDB" id="9766131at2"/>
<dbReference type="UniPathway" id="UPA00035">
    <property type="reaction ID" value="UER00044"/>
</dbReference>
<dbReference type="Proteomes" id="UP000001114">
    <property type="component" value="Chromosome"/>
</dbReference>
<dbReference type="GO" id="GO:0005737">
    <property type="term" value="C:cytoplasm"/>
    <property type="evidence" value="ECO:0007669"/>
    <property type="project" value="TreeGrafter"/>
</dbReference>
<dbReference type="GO" id="GO:0004834">
    <property type="term" value="F:tryptophan synthase activity"/>
    <property type="evidence" value="ECO:0007669"/>
    <property type="project" value="UniProtKB-UniRule"/>
</dbReference>
<dbReference type="CDD" id="cd06446">
    <property type="entry name" value="Trp-synth_B"/>
    <property type="match status" value="1"/>
</dbReference>
<dbReference type="FunFam" id="3.40.50.1100:FF:000001">
    <property type="entry name" value="Tryptophan synthase beta chain"/>
    <property type="match status" value="1"/>
</dbReference>
<dbReference type="FunFam" id="3.40.50.1100:FF:000004">
    <property type="entry name" value="Tryptophan synthase beta chain"/>
    <property type="match status" value="1"/>
</dbReference>
<dbReference type="Gene3D" id="3.40.50.1100">
    <property type="match status" value="2"/>
</dbReference>
<dbReference type="HAMAP" id="MF_00133">
    <property type="entry name" value="Trp_synth_beta"/>
    <property type="match status" value="1"/>
</dbReference>
<dbReference type="InterPro" id="IPR006653">
    <property type="entry name" value="Trp_synth_b_CS"/>
</dbReference>
<dbReference type="InterPro" id="IPR006654">
    <property type="entry name" value="Trp_synth_beta"/>
</dbReference>
<dbReference type="InterPro" id="IPR023026">
    <property type="entry name" value="Trp_synth_beta/beta-like"/>
</dbReference>
<dbReference type="InterPro" id="IPR001926">
    <property type="entry name" value="TrpB-like_PALP"/>
</dbReference>
<dbReference type="InterPro" id="IPR036052">
    <property type="entry name" value="TrpB-like_PALP_sf"/>
</dbReference>
<dbReference type="NCBIfam" id="TIGR00263">
    <property type="entry name" value="trpB"/>
    <property type="match status" value="1"/>
</dbReference>
<dbReference type="PANTHER" id="PTHR48077:SF3">
    <property type="entry name" value="TRYPTOPHAN SYNTHASE"/>
    <property type="match status" value="1"/>
</dbReference>
<dbReference type="PANTHER" id="PTHR48077">
    <property type="entry name" value="TRYPTOPHAN SYNTHASE-RELATED"/>
    <property type="match status" value="1"/>
</dbReference>
<dbReference type="Pfam" id="PF00291">
    <property type="entry name" value="PALP"/>
    <property type="match status" value="1"/>
</dbReference>
<dbReference type="PIRSF" id="PIRSF001413">
    <property type="entry name" value="Trp_syn_beta"/>
    <property type="match status" value="1"/>
</dbReference>
<dbReference type="SUPFAM" id="SSF53686">
    <property type="entry name" value="Tryptophan synthase beta subunit-like PLP-dependent enzymes"/>
    <property type="match status" value="1"/>
</dbReference>
<dbReference type="PROSITE" id="PS00168">
    <property type="entry name" value="TRP_SYNTHASE_BETA"/>
    <property type="match status" value="1"/>
</dbReference>
<evidence type="ECO:0000255" key="1">
    <source>
        <dbReference type="HAMAP-Rule" id="MF_00133"/>
    </source>
</evidence>
<accession>A6VPD9</accession>
<comment type="function">
    <text evidence="1">The beta subunit is responsible for the synthesis of L-tryptophan from indole and L-serine.</text>
</comment>
<comment type="catalytic activity">
    <reaction evidence="1">
        <text>(1S,2R)-1-C-(indol-3-yl)glycerol 3-phosphate + L-serine = D-glyceraldehyde 3-phosphate + L-tryptophan + H2O</text>
        <dbReference type="Rhea" id="RHEA:10532"/>
        <dbReference type="ChEBI" id="CHEBI:15377"/>
        <dbReference type="ChEBI" id="CHEBI:33384"/>
        <dbReference type="ChEBI" id="CHEBI:57912"/>
        <dbReference type="ChEBI" id="CHEBI:58866"/>
        <dbReference type="ChEBI" id="CHEBI:59776"/>
        <dbReference type="EC" id="4.2.1.20"/>
    </reaction>
</comment>
<comment type="cofactor">
    <cofactor evidence="1">
        <name>pyridoxal 5'-phosphate</name>
        <dbReference type="ChEBI" id="CHEBI:597326"/>
    </cofactor>
</comment>
<comment type="pathway">
    <text evidence="1">Amino-acid biosynthesis; L-tryptophan biosynthesis; L-tryptophan from chorismate: step 5/5.</text>
</comment>
<comment type="subunit">
    <text evidence="1">Tetramer of two alpha and two beta chains.</text>
</comment>
<comment type="similarity">
    <text evidence="1">Belongs to the TrpB family.</text>
</comment>
<name>TRPB_ACTSZ</name>
<gene>
    <name evidence="1" type="primary">trpB</name>
    <name type="ordered locus">Asuc_1478</name>
</gene>
<reference key="1">
    <citation type="journal article" date="2010" name="BMC Genomics">
        <title>A genomic perspective on the potential of Actinobacillus succinogenes for industrial succinate production.</title>
        <authorList>
            <person name="McKinlay J.B."/>
            <person name="Laivenieks M."/>
            <person name="Schindler B.D."/>
            <person name="McKinlay A.A."/>
            <person name="Siddaramappa S."/>
            <person name="Challacombe J.F."/>
            <person name="Lowry S.R."/>
            <person name="Clum A."/>
            <person name="Lapidus A.L."/>
            <person name="Burkhart K.B."/>
            <person name="Harkins V."/>
            <person name="Vieille C."/>
        </authorList>
    </citation>
    <scope>NUCLEOTIDE SEQUENCE [LARGE SCALE GENOMIC DNA]</scope>
    <source>
        <strain>ATCC 55618 / DSM 22257 / CCUG 43843 / 130Z</strain>
    </source>
</reference>
<sequence length="398" mass="43502">MSDTILNPYFGEFGGMYVPEILVPVLQQLEKAFVEARNDPDFQQEFQDLLKNYAGRPTALTLCRNLTKGTKTKLYLKREDLLHGGAHKTNQVLGQILLAKRMGKTRIIAETGAGQHGVATALACAMLDMPCRVYMGSKDVERQSPNVFRMRLMGTEVVPVEKGSCSLKDACCEAMRDWSANYENTHYLLGTAAGPHPFPTIVREFQKMIGEETKRQILEKEGCLPDAVIAAVGGGSNAIGMFTDFIDETNVRLIGVEPAGKGIETGEHGAPLKHGKTGIYFGMKSPIMQTEDGQIEESYSISAGLDFPSVGPQHAYLNSIGRAEYPSITDDEALAAFKELAKHEGIIPALESSHALAQALKMIKSNPEKEQLLVVNLSGRGDKDIFTVDKILRAKGEL</sequence>
<proteinExistence type="inferred from homology"/>
<feature type="chain" id="PRO_1000076377" description="Tryptophan synthase beta chain">
    <location>
        <begin position="1"/>
        <end position="398"/>
    </location>
</feature>
<feature type="modified residue" description="N6-(pyridoxal phosphate)lysine" evidence="1">
    <location>
        <position position="88"/>
    </location>
</feature>